<accession>Q2L958</accession>
<protein>
    <recommendedName>
        <fullName>NAD(P)H-quinone oxidoreductase subunit 6, chloroplastic</fullName>
        <ecNumber>7.1.1.-</ecNumber>
    </recommendedName>
    <alternativeName>
        <fullName>NAD(P)H dehydrogenase subunit 6</fullName>
    </alternativeName>
    <alternativeName>
        <fullName>NADH-plastoquinone oxidoreductase subunit 6</fullName>
    </alternativeName>
</protein>
<comment type="function">
    <text evidence="1">NDH shuttles electrons from NAD(P)H:plastoquinone, via FMN and iron-sulfur (Fe-S) centers, to quinones in the photosynthetic chain and possibly in a chloroplast respiratory chain. The immediate electron acceptor for the enzyme in this species is believed to be plastoquinone. Couples the redox reaction to proton translocation, and thus conserves the redox energy in a proton gradient (By similarity).</text>
</comment>
<comment type="catalytic activity">
    <reaction>
        <text>a plastoquinone + NADH + (n+1) H(+)(in) = a plastoquinol + NAD(+) + n H(+)(out)</text>
        <dbReference type="Rhea" id="RHEA:42608"/>
        <dbReference type="Rhea" id="RHEA-COMP:9561"/>
        <dbReference type="Rhea" id="RHEA-COMP:9562"/>
        <dbReference type="ChEBI" id="CHEBI:15378"/>
        <dbReference type="ChEBI" id="CHEBI:17757"/>
        <dbReference type="ChEBI" id="CHEBI:57540"/>
        <dbReference type="ChEBI" id="CHEBI:57945"/>
        <dbReference type="ChEBI" id="CHEBI:62192"/>
    </reaction>
</comment>
<comment type="catalytic activity">
    <reaction>
        <text>a plastoquinone + NADPH + (n+1) H(+)(in) = a plastoquinol + NADP(+) + n H(+)(out)</text>
        <dbReference type="Rhea" id="RHEA:42612"/>
        <dbReference type="Rhea" id="RHEA-COMP:9561"/>
        <dbReference type="Rhea" id="RHEA-COMP:9562"/>
        <dbReference type="ChEBI" id="CHEBI:15378"/>
        <dbReference type="ChEBI" id="CHEBI:17757"/>
        <dbReference type="ChEBI" id="CHEBI:57783"/>
        <dbReference type="ChEBI" id="CHEBI:58349"/>
        <dbReference type="ChEBI" id="CHEBI:62192"/>
    </reaction>
</comment>
<comment type="subunit">
    <text evidence="1">NDH is composed of at least 16 different subunits, 5 of which are encoded in the nucleus.</text>
</comment>
<comment type="subcellular location">
    <subcellularLocation>
        <location evidence="1">Plastid</location>
        <location evidence="1">Chloroplast thylakoid membrane</location>
        <topology evidence="1">Multi-pass membrane protein</topology>
    </subcellularLocation>
</comment>
<comment type="similarity">
    <text evidence="3">Belongs to the complex I subunit 6 family.</text>
</comment>
<evidence type="ECO:0000250" key="1"/>
<evidence type="ECO:0000255" key="2"/>
<evidence type="ECO:0000305" key="3"/>
<reference key="1">
    <citation type="journal article" date="2006" name="BMC Genomics">
        <title>The complete chloroplast genome sequence of Gossypium hirsutum: organization and phylogenetic relationships to other angiosperms.</title>
        <authorList>
            <person name="Lee S.-B."/>
            <person name="Kaittanis C."/>
            <person name="Jansen R.K."/>
            <person name="Hostetler J.B."/>
            <person name="Tallon L.J."/>
            <person name="Town C.D."/>
            <person name="Daniell H."/>
        </authorList>
    </citation>
    <scope>NUCLEOTIDE SEQUENCE [LARGE SCALE GENOMIC DNA]</scope>
    <source>
        <strain>cv. Coker 310FR</strain>
    </source>
</reference>
<organism>
    <name type="scientific">Gossypium hirsutum</name>
    <name type="common">Upland cotton</name>
    <name type="synonym">Gossypium mexicanum</name>
    <dbReference type="NCBI Taxonomy" id="3635"/>
    <lineage>
        <taxon>Eukaryota</taxon>
        <taxon>Viridiplantae</taxon>
        <taxon>Streptophyta</taxon>
        <taxon>Embryophyta</taxon>
        <taxon>Tracheophyta</taxon>
        <taxon>Spermatophyta</taxon>
        <taxon>Magnoliopsida</taxon>
        <taxon>eudicotyledons</taxon>
        <taxon>Gunneridae</taxon>
        <taxon>Pentapetalae</taxon>
        <taxon>rosids</taxon>
        <taxon>malvids</taxon>
        <taxon>Malvales</taxon>
        <taxon>Malvaceae</taxon>
        <taxon>Malvoideae</taxon>
        <taxon>Gossypium</taxon>
    </lineage>
</organism>
<dbReference type="EC" id="7.1.1.-"/>
<dbReference type="EMBL" id="DQ345959">
    <property type="protein sequence ID" value="ABC73679.1"/>
    <property type="molecule type" value="Genomic_DNA"/>
</dbReference>
<dbReference type="RefSeq" id="YP_538987.1">
    <property type="nucleotide sequence ID" value="NC_007944.1"/>
</dbReference>
<dbReference type="SMR" id="Q2L958"/>
<dbReference type="GeneID" id="3989238"/>
<dbReference type="KEGG" id="ghi:3989238"/>
<dbReference type="OrthoDB" id="62913at41938"/>
<dbReference type="Proteomes" id="UP000189702">
    <property type="component" value="Chloroplast Pltd"/>
</dbReference>
<dbReference type="GO" id="GO:0009535">
    <property type="term" value="C:chloroplast thylakoid membrane"/>
    <property type="evidence" value="ECO:0007669"/>
    <property type="project" value="UniProtKB-SubCell"/>
</dbReference>
<dbReference type="GO" id="GO:0008137">
    <property type="term" value="F:NADH dehydrogenase (ubiquinone) activity"/>
    <property type="evidence" value="ECO:0007669"/>
    <property type="project" value="InterPro"/>
</dbReference>
<dbReference type="GO" id="GO:0048038">
    <property type="term" value="F:quinone binding"/>
    <property type="evidence" value="ECO:0007669"/>
    <property type="project" value="UniProtKB-KW"/>
</dbReference>
<dbReference type="FunFam" id="1.20.120.1200:FF:000002">
    <property type="entry name" value="NAD(P)H-quinone oxidoreductase subunit 6, chloroplastic"/>
    <property type="match status" value="1"/>
</dbReference>
<dbReference type="Gene3D" id="1.20.120.1200">
    <property type="entry name" value="NADH-ubiquinone/plastoquinone oxidoreductase chain 6, subunit NuoJ"/>
    <property type="match status" value="1"/>
</dbReference>
<dbReference type="InterPro" id="IPR050290">
    <property type="entry name" value="NAD(P)H-Q_Oxidoreduct_6"/>
</dbReference>
<dbReference type="InterPro" id="IPR001457">
    <property type="entry name" value="NADH_UbQ/plastoQ_OxRdtase_su6"/>
</dbReference>
<dbReference type="InterPro" id="IPR042106">
    <property type="entry name" value="Nuo/plastoQ_OxRdtase_6_NuoJ"/>
</dbReference>
<dbReference type="PANTHER" id="PTHR48479">
    <property type="entry name" value="NAD(P)H-QUINONE OXIDOREDUCTASE SUBUNIT 6, CHLOROPLASTIC"/>
    <property type="match status" value="1"/>
</dbReference>
<dbReference type="PANTHER" id="PTHR48479:SF1">
    <property type="entry name" value="NAD(P)H-QUINONE OXIDOREDUCTASE SUBUNIT 6, CHLOROPLASTIC"/>
    <property type="match status" value="1"/>
</dbReference>
<dbReference type="Pfam" id="PF00499">
    <property type="entry name" value="Oxidored_q3"/>
    <property type="match status" value="1"/>
</dbReference>
<keyword id="KW-0150">Chloroplast</keyword>
<keyword id="KW-0472">Membrane</keyword>
<keyword id="KW-0520">NAD</keyword>
<keyword id="KW-0521">NADP</keyword>
<keyword id="KW-0934">Plastid</keyword>
<keyword id="KW-0618">Plastoquinone</keyword>
<keyword id="KW-0874">Quinone</keyword>
<keyword id="KW-1185">Reference proteome</keyword>
<keyword id="KW-0793">Thylakoid</keyword>
<keyword id="KW-1278">Translocase</keyword>
<keyword id="KW-0812">Transmembrane</keyword>
<keyword id="KW-1133">Transmembrane helix</keyword>
<keyword id="KW-0813">Transport</keyword>
<feature type="chain" id="PRO_0000360255" description="NAD(P)H-quinone oxidoreductase subunit 6, chloroplastic">
    <location>
        <begin position="1"/>
        <end position="176"/>
    </location>
</feature>
<feature type="transmembrane region" description="Helical" evidence="2">
    <location>
        <begin position="10"/>
        <end position="30"/>
    </location>
</feature>
<feature type="transmembrane region" description="Helical" evidence="2">
    <location>
        <begin position="32"/>
        <end position="52"/>
    </location>
</feature>
<feature type="transmembrane region" description="Helical" evidence="2">
    <location>
        <begin position="61"/>
        <end position="81"/>
    </location>
</feature>
<feature type="transmembrane region" description="Helical" evidence="2">
    <location>
        <begin position="92"/>
        <end position="112"/>
    </location>
</feature>
<feature type="transmembrane region" description="Helical" evidence="2">
    <location>
        <begin position="152"/>
        <end position="172"/>
    </location>
</feature>
<proteinExistence type="inferred from homology"/>
<name>NU6C_GOSHI</name>
<gene>
    <name type="primary">ndhG</name>
</gene>
<geneLocation type="chloroplast"/>
<sequence length="176" mass="19219">MDLPGPIHDFLLVFLGSGLILGGLGVVLLTNPIYSAFSLGLVLVCISLFYILSNSHFVAAAQLLIYVGAINVLILFAVMFMNGSEYYKDFNLWTIGNGLTSLVCTSILVSLITTILDTSWYGIIWTTRSNQIIEQDLISNSQQIGIHLATDFFLPFEFISIILLVALIGAIAVARQ</sequence>